<reference key="1">
    <citation type="journal article" date="1999" name="Nature">
        <title>Sequence and analysis of chromosome 4 of the plant Arabidopsis thaliana.</title>
        <authorList>
            <person name="Mayer K.F.X."/>
            <person name="Schueller C."/>
            <person name="Wambutt R."/>
            <person name="Murphy G."/>
            <person name="Volckaert G."/>
            <person name="Pohl T."/>
            <person name="Duesterhoeft A."/>
            <person name="Stiekema W."/>
            <person name="Entian K.-D."/>
            <person name="Terryn N."/>
            <person name="Harris B."/>
            <person name="Ansorge W."/>
            <person name="Brandt P."/>
            <person name="Grivell L.A."/>
            <person name="Rieger M."/>
            <person name="Weichselgartner M."/>
            <person name="de Simone V."/>
            <person name="Obermaier B."/>
            <person name="Mache R."/>
            <person name="Mueller M."/>
            <person name="Kreis M."/>
            <person name="Delseny M."/>
            <person name="Puigdomenech P."/>
            <person name="Watson M."/>
            <person name="Schmidtheini T."/>
            <person name="Reichert B."/>
            <person name="Portetelle D."/>
            <person name="Perez-Alonso M."/>
            <person name="Boutry M."/>
            <person name="Bancroft I."/>
            <person name="Vos P."/>
            <person name="Hoheisel J."/>
            <person name="Zimmermann W."/>
            <person name="Wedler H."/>
            <person name="Ridley P."/>
            <person name="Langham S.-A."/>
            <person name="McCullagh B."/>
            <person name="Bilham L."/>
            <person name="Robben J."/>
            <person name="van der Schueren J."/>
            <person name="Grymonprez B."/>
            <person name="Chuang Y.-J."/>
            <person name="Vandenbussche F."/>
            <person name="Braeken M."/>
            <person name="Weltjens I."/>
            <person name="Voet M."/>
            <person name="Bastiaens I."/>
            <person name="Aert R."/>
            <person name="Defoor E."/>
            <person name="Weitzenegger T."/>
            <person name="Bothe G."/>
            <person name="Ramsperger U."/>
            <person name="Hilbert H."/>
            <person name="Braun M."/>
            <person name="Holzer E."/>
            <person name="Brandt A."/>
            <person name="Peters S."/>
            <person name="van Staveren M."/>
            <person name="Dirkse W."/>
            <person name="Mooijman P."/>
            <person name="Klein Lankhorst R."/>
            <person name="Rose M."/>
            <person name="Hauf J."/>
            <person name="Koetter P."/>
            <person name="Berneiser S."/>
            <person name="Hempel S."/>
            <person name="Feldpausch M."/>
            <person name="Lamberth S."/>
            <person name="Van den Daele H."/>
            <person name="De Keyser A."/>
            <person name="Buysshaert C."/>
            <person name="Gielen J."/>
            <person name="Villarroel R."/>
            <person name="De Clercq R."/>
            <person name="van Montagu M."/>
            <person name="Rogers J."/>
            <person name="Cronin A."/>
            <person name="Quail M.A."/>
            <person name="Bray-Allen S."/>
            <person name="Clark L."/>
            <person name="Doggett J."/>
            <person name="Hall S."/>
            <person name="Kay M."/>
            <person name="Lennard N."/>
            <person name="McLay K."/>
            <person name="Mayes R."/>
            <person name="Pettett A."/>
            <person name="Rajandream M.A."/>
            <person name="Lyne M."/>
            <person name="Benes V."/>
            <person name="Rechmann S."/>
            <person name="Borkova D."/>
            <person name="Bloecker H."/>
            <person name="Scharfe M."/>
            <person name="Grimm M."/>
            <person name="Loehnert T.-H."/>
            <person name="Dose S."/>
            <person name="de Haan M."/>
            <person name="Maarse A.C."/>
            <person name="Schaefer M."/>
            <person name="Mueller-Auer S."/>
            <person name="Gabel C."/>
            <person name="Fuchs M."/>
            <person name="Fartmann B."/>
            <person name="Granderath K."/>
            <person name="Dauner D."/>
            <person name="Herzl A."/>
            <person name="Neumann S."/>
            <person name="Argiriou A."/>
            <person name="Vitale D."/>
            <person name="Liguori R."/>
            <person name="Piravandi E."/>
            <person name="Massenet O."/>
            <person name="Quigley F."/>
            <person name="Clabauld G."/>
            <person name="Muendlein A."/>
            <person name="Felber R."/>
            <person name="Schnabl S."/>
            <person name="Hiller R."/>
            <person name="Schmidt W."/>
            <person name="Lecharny A."/>
            <person name="Aubourg S."/>
            <person name="Chefdor F."/>
            <person name="Cooke R."/>
            <person name="Berger C."/>
            <person name="Monfort A."/>
            <person name="Casacuberta E."/>
            <person name="Gibbons T."/>
            <person name="Weber N."/>
            <person name="Vandenbol M."/>
            <person name="Bargues M."/>
            <person name="Terol J."/>
            <person name="Torres A."/>
            <person name="Perez-Perez A."/>
            <person name="Purnelle B."/>
            <person name="Bent E."/>
            <person name="Johnson S."/>
            <person name="Tacon D."/>
            <person name="Jesse T."/>
            <person name="Heijnen L."/>
            <person name="Schwarz S."/>
            <person name="Scholler P."/>
            <person name="Heber S."/>
            <person name="Francs P."/>
            <person name="Bielke C."/>
            <person name="Frishman D."/>
            <person name="Haase D."/>
            <person name="Lemcke K."/>
            <person name="Mewes H.-W."/>
            <person name="Stocker S."/>
            <person name="Zaccaria P."/>
            <person name="Bevan M."/>
            <person name="Wilson R.K."/>
            <person name="de la Bastide M."/>
            <person name="Habermann K."/>
            <person name="Parnell L."/>
            <person name="Dedhia N."/>
            <person name="Gnoj L."/>
            <person name="Schutz K."/>
            <person name="Huang E."/>
            <person name="Spiegel L."/>
            <person name="Sekhon M."/>
            <person name="Murray J."/>
            <person name="Sheet P."/>
            <person name="Cordes M."/>
            <person name="Abu-Threideh J."/>
            <person name="Stoneking T."/>
            <person name="Kalicki J."/>
            <person name="Graves T."/>
            <person name="Harmon G."/>
            <person name="Edwards J."/>
            <person name="Latreille P."/>
            <person name="Courtney L."/>
            <person name="Cloud J."/>
            <person name="Abbott A."/>
            <person name="Scott K."/>
            <person name="Johnson D."/>
            <person name="Minx P."/>
            <person name="Bentley D."/>
            <person name="Fulton B."/>
            <person name="Miller N."/>
            <person name="Greco T."/>
            <person name="Kemp K."/>
            <person name="Kramer J."/>
            <person name="Fulton L."/>
            <person name="Mardis E."/>
            <person name="Dante M."/>
            <person name="Pepin K."/>
            <person name="Hillier L.W."/>
            <person name="Nelson J."/>
            <person name="Spieth J."/>
            <person name="Ryan E."/>
            <person name="Andrews S."/>
            <person name="Geisel C."/>
            <person name="Layman D."/>
            <person name="Du H."/>
            <person name="Ali J."/>
            <person name="Berghoff A."/>
            <person name="Jones K."/>
            <person name="Drone K."/>
            <person name="Cotton M."/>
            <person name="Joshu C."/>
            <person name="Antonoiu B."/>
            <person name="Zidanic M."/>
            <person name="Strong C."/>
            <person name="Sun H."/>
            <person name="Lamar B."/>
            <person name="Yordan C."/>
            <person name="Ma P."/>
            <person name="Zhong J."/>
            <person name="Preston R."/>
            <person name="Vil D."/>
            <person name="Shekher M."/>
            <person name="Matero A."/>
            <person name="Shah R."/>
            <person name="Swaby I.K."/>
            <person name="O'Shaughnessy A."/>
            <person name="Rodriguez M."/>
            <person name="Hoffman J."/>
            <person name="Till S."/>
            <person name="Granat S."/>
            <person name="Shohdy N."/>
            <person name="Hasegawa A."/>
            <person name="Hameed A."/>
            <person name="Lodhi M."/>
            <person name="Johnson A."/>
            <person name="Chen E."/>
            <person name="Marra M.A."/>
            <person name="Martienssen R."/>
            <person name="McCombie W.R."/>
        </authorList>
    </citation>
    <scope>NUCLEOTIDE SEQUENCE [LARGE SCALE GENOMIC DNA]</scope>
    <source>
        <strain>cv. Columbia</strain>
    </source>
</reference>
<reference key="2">
    <citation type="journal article" date="2017" name="Plant J.">
        <title>Araport11: a complete reannotation of the Arabidopsis thaliana reference genome.</title>
        <authorList>
            <person name="Cheng C.Y."/>
            <person name="Krishnakumar V."/>
            <person name="Chan A.P."/>
            <person name="Thibaud-Nissen F."/>
            <person name="Schobel S."/>
            <person name="Town C.D."/>
        </authorList>
    </citation>
    <scope>GENOME REANNOTATION</scope>
    <source>
        <strain>cv. Columbia</strain>
    </source>
</reference>
<reference key="3">
    <citation type="submission" date="2006-07" db="EMBL/GenBank/DDBJ databases">
        <title>Large-scale analysis of RIKEN Arabidopsis full-length (RAFL) cDNAs.</title>
        <authorList>
            <person name="Totoki Y."/>
            <person name="Seki M."/>
            <person name="Ishida J."/>
            <person name="Nakajima M."/>
            <person name="Enju A."/>
            <person name="Kamiya A."/>
            <person name="Narusaka M."/>
            <person name="Shin-i T."/>
            <person name="Nakagawa M."/>
            <person name="Sakamoto N."/>
            <person name="Oishi K."/>
            <person name="Kohara Y."/>
            <person name="Kobayashi M."/>
            <person name="Toyoda A."/>
            <person name="Sakaki Y."/>
            <person name="Sakurai T."/>
            <person name="Iida K."/>
            <person name="Akiyama K."/>
            <person name="Satou M."/>
            <person name="Toyoda T."/>
            <person name="Konagaya A."/>
            <person name="Carninci P."/>
            <person name="Kawai J."/>
            <person name="Hayashizaki Y."/>
            <person name="Shinozaki K."/>
        </authorList>
    </citation>
    <scope>NUCLEOTIDE SEQUENCE [LARGE SCALE MRNA]</scope>
    <source>
        <strain>cv. Columbia</strain>
    </source>
</reference>
<reference key="4">
    <citation type="journal article" date="2000" name="Plant Cell">
        <title>A new family of high-affinity transporters for adenine, cytosine, and purine derivatives in Arabidopsis.</title>
        <authorList>
            <person name="Gillissen B."/>
            <person name="Buerkle L."/>
            <person name="Andre B."/>
            <person name="Kuehn C."/>
            <person name="Rentsch D."/>
            <person name="Brandl B."/>
            <person name="Frommer W.B."/>
        </authorList>
    </citation>
    <scope>GENE FAMILY</scope>
    <scope>NOMENCLATURE</scope>
</reference>
<accession>Q0WRB9</accession>
<accession>O49724</accession>
<organism>
    <name type="scientific">Arabidopsis thaliana</name>
    <name type="common">Mouse-ear cress</name>
    <dbReference type="NCBI Taxonomy" id="3702"/>
    <lineage>
        <taxon>Eukaryota</taxon>
        <taxon>Viridiplantae</taxon>
        <taxon>Streptophyta</taxon>
        <taxon>Embryophyta</taxon>
        <taxon>Tracheophyta</taxon>
        <taxon>Spermatophyta</taxon>
        <taxon>Magnoliopsida</taxon>
        <taxon>eudicotyledons</taxon>
        <taxon>Gunneridae</taxon>
        <taxon>Pentapetalae</taxon>
        <taxon>rosids</taxon>
        <taxon>malvids</taxon>
        <taxon>Brassicales</taxon>
        <taxon>Brassicaceae</taxon>
        <taxon>Camelineae</taxon>
        <taxon>Arabidopsis</taxon>
    </lineage>
</organism>
<name>PUP8_ARATH</name>
<keyword id="KW-0472">Membrane</keyword>
<keyword id="KW-1185">Reference proteome</keyword>
<keyword id="KW-0812">Transmembrane</keyword>
<keyword id="KW-1133">Transmembrane helix</keyword>
<keyword id="KW-0813">Transport</keyword>
<feature type="chain" id="PRO_0000317395" description="Probable purine permease 8">
    <location>
        <begin position="1"/>
        <end position="394"/>
    </location>
</feature>
<feature type="transmembrane region" description="Helical" evidence="1">
    <location>
        <begin position="45"/>
        <end position="65"/>
    </location>
</feature>
<feature type="transmembrane region" description="Helical" evidence="1">
    <location>
        <begin position="77"/>
        <end position="97"/>
    </location>
</feature>
<feature type="transmembrane region" description="Helical" evidence="1">
    <location>
        <begin position="113"/>
        <end position="133"/>
    </location>
</feature>
<feature type="transmembrane region" description="Helical" evidence="1">
    <location>
        <begin position="139"/>
        <end position="159"/>
    </location>
</feature>
<feature type="transmembrane region" description="Helical" evidence="1">
    <location>
        <begin position="172"/>
        <end position="192"/>
    </location>
</feature>
<feature type="transmembrane region" description="Helical" evidence="1">
    <location>
        <begin position="208"/>
        <end position="228"/>
    </location>
</feature>
<feature type="transmembrane region" description="Helical" evidence="1">
    <location>
        <begin position="247"/>
        <end position="267"/>
    </location>
</feature>
<feature type="transmembrane region" description="Helical" evidence="1">
    <location>
        <begin position="289"/>
        <end position="309"/>
    </location>
</feature>
<feature type="transmembrane region" description="Helical" evidence="1">
    <location>
        <begin position="315"/>
        <end position="335"/>
    </location>
</feature>
<feature type="transmembrane region" description="Helical" evidence="1">
    <location>
        <begin position="344"/>
        <end position="364"/>
    </location>
</feature>
<feature type="region of interest" description="Disordered" evidence="2">
    <location>
        <begin position="373"/>
        <end position="394"/>
    </location>
</feature>
<feature type="compositionally biased region" description="Basic and acidic residues" evidence="2">
    <location>
        <begin position="383"/>
        <end position="394"/>
    </location>
</feature>
<comment type="subcellular location">
    <subcellularLocation>
        <location evidence="3">Membrane</location>
        <topology evidence="3">Multi-pass membrane protein</topology>
    </subcellularLocation>
</comment>
<comment type="similarity">
    <text evidence="3">Belongs to the purine permeases (TC 2.A.7.14) family.</text>
</comment>
<comment type="sequence caution" evidence="3">
    <conflict type="erroneous gene model prediction">
        <sequence resource="EMBL-CDS" id="CAA16792"/>
    </conflict>
    <text>The predicted gene At4g18200 has been split into 3 genes: At4g18195, At4g18197 and At4g18205.</text>
</comment>
<comment type="sequence caution" evidence="3">
    <conflict type="erroneous gene model prediction">
        <sequence resource="EMBL-CDS" id="CAB78822"/>
    </conflict>
    <text>The predicted gene At4g18200 has been split into 3 genes: At4g18195, At4g18197 and At4g18205.</text>
</comment>
<sequence length="394" mass="43537">MEITQVIYVNDHNNIEANLTGQEEMNTTMEIESSSVPQSKNYKKWLRISIYVFFVLACQALSTILGRVYYENGGKSTWMGTLVQLIGFPVLFLFRFFSQTKNPKPTEADFRKFSSFTILGSVYIVTGLLVSANSYMSSVGLLYLPVSTFSLILASQLAFTAFFSYFLNSQKFTPFIVNSLFLLTISSALLVVNTDSENTAKVSRVKYVIGIICTIGASAGIGLLLSLVQLILRKVLKKQTFSTVTDLVAYQSLVASCVVLIGLFASGEWKTLTSEMENYKLGKVPYVMTLASIAISWQVYTIGVVGLIFESSSVFSNSITAVGLPIVPVVAVIVFHDKMNASKIFSIILAIWGFISFVYQHYLDEKKLKTSHTSPVGDPHLLPAEEGHTNIHSV</sequence>
<gene>
    <name type="primary">PUP8</name>
    <name type="ordered locus">At4g18195</name>
    <name type="ORF">T9A21.50</name>
</gene>
<proteinExistence type="evidence at transcript level"/>
<dbReference type="EMBL" id="AL021713">
    <property type="protein sequence ID" value="CAA16792.1"/>
    <property type="status" value="ALT_SEQ"/>
    <property type="molecule type" value="Genomic_DNA"/>
</dbReference>
<dbReference type="EMBL" id="AL161548">
    <property type="protein sequence ID" value="CAB78822.1"/>
    <property type="status" value="ALT_SEQ"/>
    <property type="molecule type" value="Genomic_DNA"/>
</dbReference>
<dbReference type="EMBL" id="CP002687">
    <property type="protein sequence ID" value="AEE84009.1"/>
    <property type="molecule type" value="Genomic_DNA"/>
</dbReference>
<dbReference type="EMBL" id="AK228393">
    <property type="protein sequence ID" value="BAF00330.1"/>
    <property type="molecule type" value="mRNA"/>
</dbReference>
<dbReference type="RefSeq" id="NP_001031662.1">
    <property type="nucleotide sequence ID" value="NM_001036585.3"/>
</dbReference>
<dbReference type="SMR" id="Q0WRB9"/>
<dbReference type="BioGRID" id="530663">
    <property type="interactions" value="7"/>
</dbReference>
<dbReference type="IntAct" id="Q0WRB9">
    <property type="interactions" value="7"/>
</dbReference>
<dbReference type="STRING" id="3702.Q0WRB9"/>
<dbReference type="PaxDb" id="3702-AT4G18195.1"/>
<dbReference type="EnsemblPlants" id="AT4G18195.1">
    <property type="protein sequence ID" value="AT4G18195.1"/>
    <property type="gene ID" value="AT4G18195"/>
</dbReference>
<dbReference type="GeneID" id="3770302"/>
<dbReference type="Gramene" id="AT4G18195.1">
    <property type="protein sequence ID" value="AT4G18195.1"/>
    <property type="gene ID" value="AT4G18195"/>
</dbReference>
<dbReference type="KEGG" id="ath:AT4G18195"/>
<dbReference type="Araport" id="AT4G18195"/>
<dbReference type="TAIR" id="AT4G18195">
    <property type="gene designation" value="PUP8"/>
</dbReference>
<dbReference type="eggNOG" id="ENOG502QVMQ">
    <property type="taxonomic scope" value="Eukaryota"/>
</dbReference>
<dbReference type="HOGENOM" id="CLU_043459_2_1_1"/>
<dbReference type="InParanoid" id="Q0WRB9"/>
<dbReference type="OMA" id="MNASKIF"/>
<dbReference type="PhylomeDB" id="Q0WRB9"/>
<dbReference type="PRO" id="PR:Q0WRB9"/>
<dbReference type="Proteomes" id="UP000006548">
    <property type="component" value="Chromosome 4"/>
</dbReference>
<dbReference type="ExpressionAtlas" id="Q0WRB9">
    <property type="expression patterns" value="baseline and differential"/>
</dbReference>
<dbReference type="GO" id="GO:0016020">
    <property type="term" value="C:membrane"/>
    <property type="evidence" value="ECO:0000304"/>
    <property type="project" value="TAIR"/>
</dbReference>
<dbReference type="GO" id="GO:0005345">
    <property type="term" value="F:purine nucleobase transmembrane transporter activity"/>
    <property type="evidence" value="ECO:0000304"/>
    <property type="project" value="TAIR"/>
</dbReference>
<dbReference type="GO" id="GO:0015211">
    <property type="term" value="F:purine nucleoside transmembrane transporter activity"/>
    <property type="evidence" value="ECO:0007669"/>
    <property type="project" value="InterPro"/>
</dbReference>
<dbReference type="GO" id="GO:0006863">
    <property type="term" value="P:purine nucleobase transport"/>
    <property type="evidence" value="ECO:0000304"/>
    <property type="project" value="TAIR"/>
</dbReference>
<dbReference type="InterPro" id="IPR030182">
    <property type="entry name" value="PUP_plant"/>
</dbReference>
<dbReference type="PANTHER" id="PTHR31376">
    <property type="entry name" value="OS09G0467300 PROTEIN-RELATED"/>
    <property type="match status" value="1"/>
</dbReference>
<dbReference type="PANTHER" id="PTHR31376:SF57">
    <property type="entry name" value="PURINE PERMEASE 22-RELATED"/>
    <property type="match status" value="1"/>
</dbReference>
<dbReference type="Pfam" id="PF16913">
    <property type="entry name" value="PUNUT"/>
    <property type="match status" value="1"/>
</dbReference>
<evidence type="ECO:0000255" key="1"/>
<evidence type="ECO:0000256" key="2">
    <source>
        <dbReference type="SAM" id="MobiDB-lite"/>
    </source>
</evidence>
<evidence type="ECO:0000305" key="3"/>
<protein>
    <recommendedName>
        <fullName>Probable purine permease 8</fullName>
        <shortName>AtPUP8</shortName>
    </recommendedName>
</protein>